<accession>Q9PJR9</accession>
<feature type="chain" id="PRO_0000218400" description="Uncharacterized protein TC_0759">
    <location>
        <begin position="1"/>
        <end position="300"/>
    </location>
</feature>
<name>Y759_CHLMU</name>
<organism>
    <name type="scientific">Chlamydia muridarum (strain MoPn / Nigg)</name>
    <dbReference type="NCBI Taxonomy" id="243161"/>
    <lineage>
        <taxon>Bacteria</taxon>
        <taxon>Pseudomonadati</taxon>
        <taxon>Chlamydiota</taxon>
        <taxon>Chlamydiia</taxon>
        <taxon>Chlamydiales</taxon>
        <taxon>Chlamydiaceae</taxon>
        <taxon>Chlamydia/Chlamydophila group</taxon>
        <taxon>Chlamydia</taxon>
    </lineage>
</organism>
<gene>
    <name type="ordered locus">TC_0759</name>
</gene>
<reference key="1">
    <citation type="journal article" date="2000" name="Nucleic Acids Res.">
        <title>Genome sequences of Chlamydia trachomatis MoPn and Chlamydia pneumoniae AR39.</title>
        <authorList>
            <person name="Read T.D."/>
            <person name="Brunham R.C."/>
            <person name="Shen C."/>
            <person name="Gill S.R."/>
            <person name="Heidelberg J.F."/>
            <person name="White O."/>
            <person name="Hickey E.K."/>
            <person name="Peterson J.D."/>
            <person name="Utterback T.R."/>
            <person name="Berry K.J."/>
            <person name="Bass S."/>
            <person name="Linher K.D."/>
            <person name="Weidman J.F."/>
            <person name="Khouri H.M."/>
            <person name="Craven B."/>
            <person name="Bowman C."/>
            <person name="Dodson R.J."/>
            <person name="Gwinn M.L."/>
            <person name="Nelson W.C."/>
            <person name="DeBoy R.T."/>
            <person name="Kolonay J.F."/>
            <person name="McClarty G."/>
            <person name="Salzberg S.L."/>
            <person name="Eisen J.A."/>
            <person name="Fraser C.M."/>
        </authorList>
    </citation>
    <scope>NUCLEOTIDE SEQUENCE [LARGE SCALE GENOMIC DNA]</scope>
    <source>
        <strain>MoPn / Nigg</strain>
    </source>
</reference>
<dbReference type="EMBL" id="AE002160">
    <property type="protein sequence ID" value="AAF39563.1"/>
    <property type="molecule type" value="Genomic_DNA"/>
</dbReference>
<dbReference type="PIR" id="C81668">
    <property type="entry name" value="C81668"/>
</dbReference>
<dbReference type="KEGG" id="cmu:TC_0759"/>
<dbReference type="eggNOG" id="COG1388">
    <property type="taxonomic scope" value="Bacteria"/>
</dbReference>
<dbReference type="HOGENOM" id="CLU_766615_0_0_0"/>
<dbReference type="OrthoDB" id="17478at2"/>
<dbReference type="Proteomes" id="UP000000800">
    <property type="component" value="Chromosome"/>
</dbReference>
<protein>
    <recommendedName>
        <fullName>Uncharacterized protein TC_0759</fullName>
    </recommendedName>
</protein>
<comment type="similarity">
    <text evidence="1">Belongs to the chlamydial CPn_0593/CT_474/TC_0759 family.</text>
</comment>
<evidence type="ECO:0000305" key="1"/>
<sequence>MKNKTTIRWLKQALVLSSIVNILLLLLIYSTVFRKDIYKLQVFPGHLIAKSARIGKIPEDILERLEAASLADLIILLREERLVFGHPLKLWALSMGIQKYSLDITPMLTHPLTFIKLKSPEQTWLLPDINDQEFSRINQYLHTERFPFSSKGFFRIMARDWEAGIVNEDILYRFCHIPEFLYVRSLLFGAEIEAASVASLARMVIQGGEDLFFSLCCLENLQTAISDQQRRVFLKAYVDRQEPLAALLLLVHDADWVLHEFSDTDLKYFVQLLPKEVSYTKQFLDQVGHSCRQEILSILQ</sequence>
<proteinExistence type="inferred from homology"/>